<organism>
    <name type="scientific">Chlamydia trachomatis serovar D (strain ATCC VR-885 / DSM 19411 / UW-3/Cx)</name>
    <dbReference type="NCBI Taxonomy" id="272561"/>
    <lineage>
        <taxon>Bacteria</taxon>
        <taxon>Pseudomonadati</taxon>
        <taxon>Chlamydiota</taxon>
        <taxon>Chlamydiia</taxon>
        <taxon>Chlamydiales</taxon>
        <taxon>Chlamydiaceae</taxon>
        <taxon>Chlamydia/Chlamydophila group</taxon>
        <taxon>Chlamydia</taxon>
    </lineage>
</organism>
<feature type="chain" id="PRO_0000066675" description="Aspartokinase">
    <location>
        <begin position="1"/>
        <end position="431"/>
    </location>
</feature>
<gene>
    <name type="primary">lysC</name>
    <name type="ordered locus">CT_362</name>
</gene>
<keyword id="KW-0028">Amino-acid biosynthesis</keyword>
<keyword id="KW-0067">ATP-binding</keyword>
<keyword id="KW-0220">Diaminopimelate biosynthesis</keyword>
<keyword id="KW-0418">Kinase</keyword>
<keyword id="KW-0457">Lysine biosynthesis</keyword>
<keyword id="KW-0547">Nucleotide-binding</keyword>
<keyword id="KW-1185">Reference proteome</keyword>
<keyword id="KW-0808">Transferase</keyword>
<sequence length="431" mass="47648">MLRQETAPLVCKFGGTSVGTAQSIRRVCEIIQEERPSFVVVSAVAGVTDWLEEFCRLPKGKRAALTEKIRERHESIAKELGIEVSLAIFWEILEHFEDVEELFSEDQARILAIGEDLSSTLICSYCCTYVLPLKRLEARQVILTDSQFLRAVPDLALMQTAWGELALQEDTIYLMQGFLGATSSGKTTVLGRGGSDFSASLIGELCKARELRIYTDVCGVHTADPKILKDTQLIDSLTFEEMQELASSGAKVLHQDMLKPCVRAKVPIFVTSTFNVTKEGTWICASLNESTEGPVIKALSLKSNQALWFVEYNSPLVRLEDVLGCVRSLGFVPGVVMAQSLGVYFTIDWEEYPQTITKALEAFGTVSCEGPLSLVALVGAKLASWSMSRVFEALHRTPVLCWSQTDTVINLIINKDFGVAVTELLHDCLFK</sequence>
<evidence type="ECO:0000305" key="1"/>
<comment type="catalytic activity">
    <reaction>
        <text>L-aspartate + ATP = 4-phospho-L-aspartate + ADP</text>
        <dbReference type="Rhea" id="RHEA:23776"/>
        <dbReference type="ChEBI" id="CHEBI:29991"/>
        <dbReference type="ChEBI" id="CHEBI:30616"/>
        <dbReference type="ChEBI" id="CHEBI:57535"/>
        <dbReference type="ChEBI" id="CHEBI:456216"/>
        <dbReference type="EC" id="2.7.2.4"/>
    </reaction>
</comment>
<comment type="pathway">
    <text>Amino-acid biosynthesis; L-lysine biosynthesis via DAP pathway; (S)-tetrahydrodipicolinate from L-aspartate: step 1/4.</text>
</comment>
<comment type="pathway">
    <text>Amino-acid biosynthesis; L-methionine biosynthesis via de novo pathway; L-homoserine from L-aspartate: step 1/3.</text>
</comment>
<comment type="pathway">
    <text>Amino-acid biosynthesis; L-threonine biosynthesis; L-threonine from L-aspartate: step 1/5.</text>
</comment>
<comment type="similarity">
    <text evidence="1">Belongs to the aspartokinase family.</text>
</comment>
<dbReference type="EC" id="2.7.2.4"/>
<dbReference type="EMBL" id="AE001273">
    <property type="protein sequence ID" value="AAC67958.1"/>
    <property type="molecule type" value="Genomic_DNA"/>
</dbReference>
<dbReference type="PIR" id="G71524">
    <property type="entry name" value="G71524"/>
</dbReference>
<dbReference type="RefSeq" id="NP_219871.1">
    <property type="nucleotide sequence ID" value="NC_000117.1"/>
</dbReference>
<dbReference type="RefSeq" id="WP_010725171.1">
    <property type="nucleotide sequence ID" value="NC_000117.1"/>
</dbReference>
<dbReference type="SMR" id="O84367"/>
<dbReference type="FunCoup" id="O84367">
    <property type="interactions" value="62"/>
</dbReference>
<dbReference type="STRING" id="272561.CT_362"/>
<dbReference type="EnsemblBacteria" id="AAC67958">
    <property type="protein sequence ID" value="AAC67958"/>
    <property type="gene ID" value="CT_362"/>
</dbReference>
<dbReference type="GeneID" id="884754"/>
<dbReference type="KEGG" id="ctr:CT_362"/>
<dbReference type="PATRIC" id="fig|272561.5.peg.391"/>
<dbReference type="HOGENOM" id="CLU_009116_6_0_0"/>
<dbReference type="InParanoid" id="O84367"/>
<dbReference type="OrthoDB" id="9799110at2"/>
<dbReference type="UniPathway" id="UPA00034">
    <property type="reaction ID" value="UER00015"/>
</dbReference>
<dbReference type="UniPathway" id="UPA00050">
    <property type="reaction ID" value="UER00461"/>
</dbReference>
<dbReference type="UniPathway" id="UPA00051">
    <property type="reaction ID" value="UER00462"/>
</dbReference>
<dbReference type="Proteomes" id="UP000000431">
    <property type="component" value="Chromosome"/>
</dbReference>
<dbReference type="GO" id="GO:0005829">
    <property type="term" value="C:cytosol"/>
    <property type="evidence" value="ECO:0000318"/>
    <property type="project" value="GO_Central"/>
</dbReference>
<dbReference type="GO" id="GO:0004072">
    <property type="term" value="F:aspartate kinase activity"/>
    <property type="evidence" value="ECO:0000318"/>
    <property type="project" value="GO_Central"/>
</dbReference>
<dbReference type="GO" id="GO:0005524">
    <property type="term" value="F:ATP binding"/>
    <property type="evidence" value="ECO:0007669"/>
    <property type="project" value="UniProtKB-KW"/>
</dbReference>
<dbReference type="GO" id="GO:0019877">
    <property type="term" value="P:diaminopimelate biosynthetic process"/>
    <property type="evidence" value="ECO:0007669"/>
    <property type="project" value="UniProtKB-KW"/>
</dbReference>
<dbReference type="GO" id="GO:0009090">
    <property type="term" value="P:homoserine biosynthetic process"/>
    <property type="evidence" value="ECO:0000318"/>
    <property type="project" value="GO_Central"/>
</dbReference>
<dbReference type="GO" id="GO:0009089">
    <property type="term" value="P:lysine biosynthetic process via diaminopimelate"/>
    <property type="evidence" value="ECO:0000318"/>
    <property type="project" value="GO_Central"/>
</dbReference>
<dbReference type="GO" id="GO:0009088">
    <property type="term" value="P:threonine biosynthetic process"/>
    <property type="evidence" value="ECO:0007669"/>
    <property type="project" value="UniProtKB-UniPathway"/>
</dbReference>
<dbReference type="CDD" id="cd04243">
    <property type="entry name" value="AAK_AK-HSDH-like"/>
    <property type="match status" value="1"/>
</dbReference>
<dbReference type="Gene3D" id="3.30.70.260">
    <property type="match status" value="2"/>
</dbReference>
<dbReference type="Gene3D" id="3.40.1160.10">
    <property type="entry name" value="Acetylglutamate kinase-like"/>
    <property type="match status" value="1"/>
</dbReference>
<dbReference type="Gene3D" id="1.20.120.1320">
    <property type="entry name" value="Aspartokinase, catalytic domain"/>
    <property type="match status" value="1"/>
</dbReference>
<dbReference type="InterPro" id="IPR036393">
    <property type="entry name" value="AceGlu_kinase-like_sf"/>
</dbReference>
<dbReference type="InterPro" id="IPR001048">
    <property type="entry name" value="Asp/Glu/Uridylate_kinase"/>
</dbReference>
<dbReference type="InterPro" id="IPR001341">
    <property type="entry name" value="Asp_kinase"/>
</dbReference>
<dbReference type="InterPro" id="IPR042199">
    <property type="entry name" value="AsparK_Bifunc_asparK/hSer_DH"/>
</dbReference>
<dbReference type="InterPro" id="IPR018042">
    <property type="entry name" value="Aspartate_kinase_CS"/>
</dbReference>
<dbReference type="NCBIfam" id="TIGR00657">
    <property type="entry name" value="asp_kinases"/>
    <property type="match status" value="1"/>
</dbReference>
<dbReference type="NCBIfam" id="NF004579">
    <property type="entry name" value="PRK05925.1"/>
    <property type="match status" value="1"/>
</dbReference>
<dbReference type="PANTHER" id="PTHR21499">
    <property type="entry name" value="ASPARTATE KINASE"/>
    <property type="match status" value="1"/>
</dbReference>
<dbReference type="PANTHER" id="PTHR21499:SF3">
    <property type="entry name" value="ASPARTOKINASE"/>
    <property type="match status" value="1"/>
</dbReference>
<dbReference type="Pfam" id="PF00696">
    <property type="entry name" value="AA_kinase"/>
    <property type="match status" value="1"/>
</dbReference>
<dbReference type="SUPFAM" id="SSF53633">
    <property type="entry name" value="Carbamate kinase-like"/>
    <property type="match status" value="1"/>
</dbReference>
<dbReference type="PROSITE" id="PS00324">
    <property type="entry name" value="ASPARTOKINASE"/>
    <property type="match status" value="1"/>
</dbReference>
<reference key="1">
    <citation type="journal article" date="1998" name="Science">
        <title>Genome sequence of an obligate intracellular pathogen of humans: Chlamydia trachomatis.</title>
        <authorList>
            <person name="Stephens R.S."/>
            <person name="Kalman S."/>
            <person name="Lammel C.J."/>
            <person name="Fan J."/>
            <person name="Marathe R."/>
            <person name="Aravind L."/>
            <person name="Mitchell W.P."/>
            <person name="Olinger L."/>
            <person name="Tatusov R.L."/>
            <person name="Zhao Q."/>
            <person name="Koonin E.V."/>
            <person name="Davis R.W."/>
        </authorList>
    </citation>
    <scope>NUCLEOTIDE SEQUENCE [LARGE SCALE GENOMIC DNA]</scope>
    <source>
        <strain>ATCC VR-885 / DSM 19411 / UW-3/Cx</strain>
    </source>
</reference>
<name>AK_CHLTR</name>
<accession>O84367</accession>
<protein>
    <recommendedName>
        <fullName>Aspartokinase</fullName>
        <ecNumber>2.7.2.4</ecNumber>
    </recommendedName>
    <alternativeName>
        <fullName>Aspartate kinase</fullName>
    </alternativeName>
</protein>
<proteinExistence type="inferred from homology"/>